<organismHost>
    <name type="scientific">Tipula</name>
    <dbReference type="NCBI Taxonomy" id="41043"/>
</organismHost>
<dbReference type="EMBL" id="M33542">
    <property type="protein sequence ID" value="AAA46245.1"/>
    <property type="molecule type" value="Genomic_DNA"/>
</dbReference>
<dbReference type="PIR" id="A33558">
    <property type="entry name" value="VCXFTI"/>
</dbReference>
<dbReference type="SMR" id="P18162"/>
<dbReference type="GO" id="GO:0019028">
    <property type="term" value="C:viral capsid"/>
    <property type="evidence" value="ECO:0007669"/>
    <property type="project" value="UniProtKB-KW"/>
</dbReference>
<dbReference type="GO" id="GO:0005198">
    <property type="term" value="F:structural molecule activity"/>
    <property type="evidence" value="ECO:0007669"/>
    <property type="project" value="InterPro"/>
</dbReference>
<dbReference type="Gene3D" id="2.70.9.10">
    <property type="entry name" value="Adenovirus Type 2 Hexon, domain 4"/>
    <property type="match status" value="1"/>
</dbReference>
<dbReference type="Gene3D" id="2.70.9.20">
    <property type="entry name" value="Major capsid protein Vp54"/>
    <property type="match status" value="1"/>
</dbReference>
<dbReference type="InterPro" id="IPR031654">
    <property type="entry name" value="Capsid_N"/>
</dbReference>
<dbReference type="InterPro" id="IPR007542">
    <property type="entry name" value="MCP_C"/>
</dbReference>
<dbReference type="InterPro" id="IPR038519">
    <property type="entry name" value="MCP_C_sf"/>
</dbReference>
<dbReference type="InterPro" id="IPR016112">
    <property type="entry name" value="VP_dsDNA_II"/>
</dbReference>
<dbReference type="Pfam" id="PF16903">
    <property type="entry name" value="Capsid_N"/>
    <property type="match status" value="1"/>
</dbReference>
<dbReference type="Pfam" id="PF04451">
    <property type="entry name" value="Capsid_NCLDV"/>
    <property type="match status" value="1"/>
</dbReference>
<dbReference type="SUPFAM" id="SSF49749">
    <property type="entry name" value="Group II dsDNA viruses VP"/>
    <property type="match status" value="2"/>
</dbReference>
<comment type="function">
    <text evidence="1">Major capsid protein that self assembles to form an icosahedral capsid. Represents around 50% of the total virion protein mass (By similarity).</text>
</comment>
<comment type="subunit">
    <text evidence="1">Homotrimer.</text>
</comment>
<comment type="subcellular location">
    <subcellularLocation>
        <location evidence="2">Virion</location>
    </subcellularLocation>
</comment>
<comment type="PTM">
    <text>The N-terminus is blocked.</text>
</comment>
<comment type="similarity">
    <text evidence="2">Belongs to the NCLDV major capsid protein family.</text>
</comment>
<gene>
    <name type="primary">MCP</name>
</gene>
<keyword id="KW-0167">Capsid protein</keyword>
<keyword id="KW-0903">Direct protein sequencing</keyword>
<keyword id="KW-0426">Late protein</keyword>
<keyword id="KW-0946">Virion</keyword>
<reference key="1">
    <citation type="journal article" date="1990" name="J. Virol.">
        <title>Molecular cloning, characterization, and expression of the Tipula iridescent virus capsid gene.</title>
        <authorList>
            <person name="Tajbakhsh S."/>
            <person name="Lee P.E."/>
            <person name="Watson D.C."/>
            <person name="Seligy V.L."/>
        </authorList>
    </citation>
    <scope>NUCLEOTIDE SEQUENCE [GENOMIC DNA]</scope>
    <scope>PARTIAL PROTEIN SEQUENCE</scope>
</reference>
<protein>
    <recommendedName>
        <fullName>Major capsid protein</fullName>
        <shortName>MCP</shortName>
    </recommendedName>
    <alternativeName>
        <fullName>P50</fullName>
    </alternativeName>
</protein>
<evidence type="ECO:0000250" key="1"/>
<evidence type="ECO:0000305" key="2"/>
<sequence>MSMSSSNITSGFIDIATFDEIEKYMYGGPTATAYFVREIRKSTWFTQVPVPLSRNTGNAAFGQEWSVSISRAGDYLLQTWLRVNIPPVTLSGLLGNTYSLRWTKNLMHNLIREATITFNDLVAARFDNYHLDFWSAFTVPASKRNGYDNMIGNVSSLINPVAPGGTLGSVGGINLNLPLPFFFSRDTGVALPTAALPYNEMQINFNFRDWHELLILTNSALVPPASPYVPIVVGTHISAAPVLGPVQVWANYAIVSNEERRRMGCAIRDILIEQVQTAPRQNYVPLTNASPTFDIRFSHAIKALFFAVRNKTSAAEWSNYATSSPVVTGATVNYEPTGSFDPIANTTLIYENTNRLGAMGSDYFSLINPFYHAPTIPSFIGYHLYSYSLHFYDLDPMGSTNYGKLTNVSVVPQASPAAIAAAGGTGGQAGSDYPQNYEFVILAVNNNIVRISGGETPQNYIAVC</sequence>
<feature type="chain" id="PRO_0000222380" description="Major capsid protein">
    <location>
        <begin position="1"/>
        <end position="464"/>
    </location>
</feature>
<accession>P18162</accession>
<name>MCP_IRV1</name>
<proteinExistence type="evidence at protein level"/>
<organism>
    <name type="scientific">Tipula iridescent virus</name>
    <name type="common">TIV</name>
    <name type="synonym">Insect iridescent virus type 1</name>
    <dbReference type="NCBI Taxonomy" id="10490"/>
    <lineage>
        <taxon>Viruses</taxon>
        <taxon>Varidnaviria</taxon>
        <taxon>Bamfordvirae</taxon>
        <taxon>Nucleocytoviricota</taxon>
        <taxon>Megaviricetes</taxon>
        <taxon>Pimascovirales</taxon>
        <taxon>Iridoviridae</taxon>
        <taxon>Betairidovirinae</taxon>
        <taxon>Iridovirus</taxon>
        <taxon>Invertebrate iridescent virus 1</taxon>
    </lineage>
</organism>